<proteinExistence type="evidence at transcript level"/>
<name>DHSO_PIG</name>
<protein>
    <recommendedName>
        <fullName>Sorbitol dehydrogenase</fullName>
        <shortName>SDH</shortName>
        <ecNumber evidence="1">1.1.1.-</ecNumber>
    </recommendedName>
    <alternativeName>
        <fullName>L-iditol 2-dehydrogenase</fullName>
        <ecNumber evidence="1">1.1.1.14</ecNumber>
    </alternativeName>
    <alternativeName>
        <fullName evidence="4">Polyol dehydrogenase</fullName>
    </alternativeName>
    <alternativeName>
        <fullName>Xylitol dehydrogenase</fullName>
        <shortName>XDH</shortName>
        <ecNumber evidence="1">1.1.1.9</ecNumber>
    </alternativeName>
</protein>
<reference evidence="4" key="1">
    <citation type="journal article" date="1996" name="Mamm. Genome">
        <title>Evaluation and characterization of a porcine small intestine cDNA library: analysis of 839 clones.</title>
        <authorList>
            <person name="Winteroe A.K."/>
            <person name="Fredholm M."/>
            <person name="Davies W."/>
        </authorList>
    </citation>
    <scope>NUCLEOTIDE SEQUENCE [LARGE SCALE MRNA]</scope>
    <source>
        <tissue evidence="5">Small intestine</tissue>
    </source>
</reference>
<feature type="chain" id="PRO_0000160818" description="Sorbitol dehydrogenase">
    <location>
        <begin position="1"/>
        <end position="97" status="greater than"/>
    </location>
</feature>
<feature type="binding site" evidence="1">
    <location>
        <position position="44"/>
    </location>
    <ligand>
        <name>Zn(2+)</name>
        <dbReference type="ChEBI" id="CHEBI:29105"/>
        <note>catalytic</note>
    </ligand>
</feature>
<feature type="binding site" evidence="1">
    <location>
        <position position="50"/>
    </location>
    <ligand>
        <name>substrate</name>
    </ligand>
</feature>
<feature type="binding site" evidence="1">
    <location>
        <position position="69"/>
    </location>
    <ligand>
        <name>Zn(2+)</name>
        <dbReference type="ChEBI" id="CHEBI:29105"/>
        <note>catalytic</note>
    </ligand>
</feature>
<feature type="binding site" evidence="1">
    <location>
        <position position="70"/>
    </location>
    <ligand>
        <name>Zn(2+)</name>
        <dbReference type="ChEBI" id="CHEBI:29105"/>
        <note>catalytic</note>
    </ligand>
</feature>
<feature type="non-terminal residue">
    <location>
        <position position="97"/>
    </location>
</feature>
<sequence>MAAAKPENLSLVVHGPGDLRLENYPIPEPGPNXVLLKMHSVGICGSDVHYWQHGRIGNFVVKKPMVLGHEASGTXVKVGSLVTHLKPGDRXAXEPGA</sequence>
<gene>
    <name type="primary">SORD</name>
</gene>
<organism evidence="5">
    <name type="scientific">Sus scrofa</name>
    <name type="common">Pig</name>
    <dbReference type="NCBI Taxonomy" id="9823"/>
    <lineage>
        <taxon>Eukaryota</taxon>
        <taxon>Metazoa</taxon>
        <taxon>Chordata</taxon>
        <taxon>Craniata</taxon>
        <taxon>Vertebrata</taxon>
        <taxon>Euteleostomi</taxon>
        <taxon>Mammalia</taxon>
        <taxon>Eutheria</taxon>
        <taxon>Laurasiatheria</taxon>
        <taxon>Artiodactyla</taxon>
        <taxon>Suina</taxon>
        <taxon>Suidae</taxon>
        <taxon>Sus</taxon>
    </lineage>
</organism>
<evidence type="ECO:0000250" key="1">
    <source>
        <dbReference type="UniProtKB" id="P07846"/>
    </source>
</evidence>
<evidence type="ECO:0000250" key="2">
    <source>
        <dbReference type="UniProtKB" id="Q00796"/>
    </source>
</evidence>
<evidence type="ECO:0000250" key="3">
    <source>
        <dbReference type="UniProtKB" id="Q64442"/>
    </source>
</evidence>
<evidence type="ECO:0000305" key="4"/>
<evidence type="ECO:0000312" key="5">
    <source>
        <dbReference type="EMBL" id="CAA23205.1"/>
    </source>
</evidence>
<accession>Q29318</accession>
<comment type="function">
    <text evidence="1 2">Polyol dehydrogenase that catalyzes the reversible NAD(+)-dependent oxidation of various sugar alcohols. Is active with xylitol, L-iditol and D-sorbitol (D-glucitol) as substrates, leading to the C2-oxidized products D-xylulose, L-sorbose and D-fructose, respectively (By similarity). Is a key enzyme in the polyol pathway that interconverts glucose and fructose via sorbitol, which constitutes an important alternate route for glucose metabolism. May play a role in sperm motility by using sorbitol as an alternative energy source for sperm motility (By similarity).</text>
</comment>
<comment type="catalytic activity">
    <reaction evidence="1">
        <text>xylitol + NAD(+) = D-xylulose + NADH + H(+)</text>
        <dbReference type="Rhea" id="RHEA:20433"/>
        <dbReference type="ChEBI" id="CHEBI:15378"/>
        <dbReference type="ChEBI" id="CHEBI:17140"/>
        <dbReference type="ChEBI" id="CHEBI:17151"/>
        <dbReference type="ChEBI" id="CHEBI:57540"/>
        <dbReference type="ChEBI" id="CHEBI:57945"/>
        <dbReference type="EC" id="1.1.1.9"/>
    </reaction>
</comment>
<comment type="catalytic activity">
    <reaction evidence="1">
        <text>L-iditol + NAD(+) = keto-L-sorbose + NADH + H(+)</text>
        <dbReference type="Rhea" id="RHEA:10160"/>
        <dbReference type="ChEBI" id="CHEBI:13172"/>
        <dbReference type="ChEBI" id="CHEBI:15378"/>
        <dbReference type="ChEBI" id="CHEBI:18202"/>
        <dbReference type="ChEBI" id="CHEBI:57540"/>
        <dbReference type="ChEBI" id="CHEBI:57945"/>
        <dbReference type="EC" id="1.1.1.14"/>
    </reaction>
</comment>
<comment type="catalytic activity">
    <reaction evidence="1">
        <text>keto-D-fructose + NADH + H(+) = D-sorbitol + NAD(+)</text>
        <dbReference type="Rhea" id="RHEA:33031"/>
        <dbReference type="ChEBI" id="CHEBI:15378"/>
        <dbReference type="ChEBI" id="CHEBI:17924"/>
        <dbReference type="ChEBI" id="CHEBI:48095"/>
        <dbReference type="ChEBI" id="CHEBI:57540"/>
        <dbReference type="ChEBI" id="CHEBI:57945"/>
    </reaction>
</comment>
<comment type="cofactor">
    <cofactor evidence="1">
        <name>Zn(2+)</name>
        <dbReference type="ChEBI" id="CHEBI:29105"/>
    </cofactor>
    <text evidence="1">Binds 1 zinc ion per subunit.</text>
</comment>
<comment type="subunit">
    <text evidence="1">Homotetramer.</text>
</comment>
<comment type="subcellular location">
    <subcellularLocation>
        <location evidence="3">Mitochondrion membrane</location>
        <topology evidence="3">Peripheral membrane protein</topology>
    </subcellularLocation>
    <subcellularLocation>
        <location evidence="3">Cell projection</location>
        <location evidence="3">Cilium</location>
        <location evidence="3">Flagellum</location>
    </subcellularLocation>
    <text evidence="3">Associated with mitochondria of the midpiece and near the plasma membrane in the principal piece of the flagellum. Also found in the epididymosome, secreted by the epididymal epithelium and that transfers proteins from the epididymal fluid to the sperm surface.</text>
</comment>
<comment type="similarity">
    <text evidence="4">Belongs to the zinc-containing alcohol dehydrogenase family.</text>
</comment>
<dbReference type="EC" id="1.1.1.-" evidence="1"/>
<dbReference type="EC" id="1.1.1.14" evidence="1"/>
<dbReference type="EC" id="1.1.1.9" evidence="1"/>
<dbReference type="EMBL" id="F14714">
    <property type="protein sequence ID" value="CAA23205.1"/>
    <property type="molecule type" value="mRNA"/>
</dbReference>
<dbReference type="STRING" id="9823.ENSSSCP00000047058"/>
<dbReference type="PaxDb" id="9823-ENSSSCP00000005040"/>
<dbReference type="PeptideAtlas" id="Q29318"/>
<dbReference type="eggNOG" id="KOG0024">
    <property type="taxonomic scope" value="Eukaryota"/>
</dbReference>
<dbReference type="InParanoid" id="Q29318"/>
<dbReference type="Proteomes" id="UP000008227">
    <property type="component" value="Unplaced"/>
</dbReference>
<dbReference type="Proteomes" id="UP000314985">
    <property type="component" value="Unplaced"/>
</dbReference>
<dbReference type="Proteomes" id="UP000694570">
    <property type="component" value="Unplaced"/>
</dbReference>
<dbReference type="Proteomes" id="UP000694571">
    <property type="component" value="Unplaced"/>
</dbReference>
<dbReference type="Proteomes" id="UP000694720">
    <property type="component" value="Unplaced"/>
</dbReference>
<dbReference type="Proteomes" id="UP000694722">
    <property type="component" value="Unplaced"/>
</dbReference>
<dbReference type="Proteomes" id="UP000694723">
    <property type="component" value="Unplaced"/>
</dbReference>
<dbReference type="Proteomes" id="UP000694724">
    <property type="component" value="Unplaced"/>
</dbReference>
<dbReference type="Proteomes" id="UP000694725">
    <property type="component" value="Unplaced"/>
</dbReference>
<dbReference type="Proteomes" id="UP000694726">
    <property type="component" value="Unplaced"/>
</dbReference>
<dbReference type="Proteomes" id="UP000694727">
    <property type="component" value="Unplaced"/>
</dbReference>
<dbReference type="Proteomes" id="UP000694728">
    <property type="component" value="Unplaced"/>
</dbReference>
<dbReference type="GO" id="GO:0031966">
    <property type="term" value="C:mitochondrial membrane"/>
    <property type="evidence" value="ECO:0007669"/>
    <property type="project" value="UniProtKB-SubCell"/>
</dbReference>
<dbReference type="GO" id="GO:0031514">
    <property type="term" value="C:motile cilium"/>
    <property type="evidence" value="ECO:0000250"/>
    <property type="project" value="UniProtKB"/>
</dbReference>
<dbReference type="GO" id="GO:0046526">
    <property type="term" value="F:D-xylulose reductase activity"/>
    <property type="evidence" value="ECO:0007669"/>
    <property type="project" value="UniProtKB-EC"/>
</dbReference>
<dbReference type="GO" id="GO:0003939">
    <property type="term" value="F:L-iditol 2-dehydrogenase (NAD+) activity"/>
    <property type="evidence" value="ECO:0007669"/>
    <property type="project" value="UniProtKB-EC"/>
</dbReference>
<dbReference type="GO" id="GO:0008270">
    <property type="term" value="F:zinc ion binding"/>
    <property type="evidence" value="ECO:0007669"/>
    <property type="project" value="InterPro"/>
</dbReference>
<dbReference type="GO" id="GO:0030317">
    <property type="term" value="P:flagellated sperm motility"/>
    <property type="evidence" value="ECO:0000250"/>
    <property type="project" value="UniProtKB"/>
</dbReference>
<dbReference type="Gene3D" id="3.90.180.10">
    <property type="entry name" value="Medium-chain alcohol dehydrogenases, catalytic domain"/>
    <property type="match status" value="1"/>
</dbReference>
<dbReference type="InterPro" id="IPR013154">
    <property type="entry name" value="ADH-like_N"/>
</dbReference>
<dbReference type="InterPro" id="IPR002328">
    <property type="entry name" value="ADH_Zn_CS"/>
</dbReference>
<dbReference type="InterPro" id="IPR011032">
    <property type="entry name" value="GroES-like_sf"/>
</dbReference>
<dbReference type="PANTHER" id="PTHR43161">
    <property type="entry name" value="SORBITOL DEHYDROGENASE"/>
    <property type="match status" value="1"/>
</dbReference>
<dbReference type="PANTHER" id="PTHR43161:SF9">
    <property type="entry name" value="SORBITOL DEHYDROGENASE"/>
    <property type="match status" value="1"/>
</dbReference>
<dbReference type="Pfam" id="PF08240">
    <property type="entry name" value="ADH_N"/>
    <property type="match status" value="1"/>
</dbReference>
<dbReference type="SUPFAM" id="SSF50129">
    <property type="entry name" value="GroES-like"/>
    <property type="match status" value="1"/>
</dbReference>
<dbReference type="PROSITE" id="PS00059">
    <property type="entry name" value="ADH_ZINC"/>
    <property type="match status" value="1"/>
</dbReference>
<keyword id="KW-0966">Cell projection</keyword>
<keyword id="KW-0969">Cilium</keyword>
<keyword id="KW-0282">Flagellum</keyword>
<keyword id="KW-0472">Membrane</keyword>
<keyword id="KW-0479">Metal-binding</keyword>
<keyword id="KW-0496">Mitochondrion</keyword>
<keyword id="KW-0520">NAD</keyword>
<keyword id="KW-0560">Oxidoreductase</keyword>
<keyword id="KW-1185">Reference proteome</keyword>
<keyword id="KW-0862">Zinc</keyword>